<proteinExistence type="evidence at protein level"/>
<name>GLB4_LAMSP</name>
<keyword id="KW-0903">Direct protein sequencing</keyword>
<keyword id="KW-0349">Heme</keyword>
<keyword id="KW-0408">Iron</keyword>
<keyword id="KW-0479">Metal-binding</keyword>
<keyword id="KW-0561">Oxygen transport</keyword>
<keyword id="KW-0813">Transport</keyword>
<dbReference type="PIR" id="S01810">
    <property type="entry name" value="S01810"/>
</dbReference>
<dbReference type="SMR" id="P20413"/>
<dbReference type="GO" id="GO:0046872">
    <property type="term" value="F:metal ion binding"/>
    <property type="evidence" value="ECO:0007669"/>
    <property type="project" value="UniProtKB-KW"/>
</dbReference>
<dbReference type="GO" id="GO:0005344">
    <property type="term" value="F:oxygen carrier activity"/>
    <property type="evidence" value="ECO:0007669"/>
    <property type="project" value="UniProtKB-KW"/>
</dbReference>
<accession>P20413</accession>
<organism>
    <name type="scientific">Lamellibrachia sp.</name>
    <name type="common">Deep-sea giant tube worm</name>
    <dbReference type="NCBI Taxonomy" id="6424"/>
    <lineage>
        <taxon>Eukaryota</taxon>
        <taxon>Metazoa</taxon>
        <taxon>Spiralia</taxon>
        <taxon>Lophotrochozoa</taxon>
        <taxon>Annelida</taxon>
        <taxon>Polychaeta</taxon>
        <taxon>Sedentaria</taxon>
        <taxon>Canalipalpata</taxon>
        <taxon>Sabellida</taxon>
        <taxon>Siboglinidae</taxon>
        <taxon>Lamellibrachia</taxon>
    </lineage>
</organism>
<protein>
    <recommendedName>
        <fullName>Giant hemoglobin AIV chain</fullName>
    </recommendedName>
</protein>
<evidence type="ECO:0000255" key="1">
    <source>
        <dbReference type="PROSITE-ProRule" id="PRU00238"/>
    </source>
</evidence>
<comment type="subunit">
    <text>Giant hemoglobin is composed of four heme-containing chains (AI to AIV), and two linker chains (AV and AVI).</text>
</comment>
<comment type="similarity">
    <text evidence="1">Belongs to the globin family.</text>
</comment>
<sequence length="32" mass="3695">SGNVAEAPKHYHCSYEDADIVMREWYHVWGSG</sequence>
<reference key="1">
    <citation type="journal article" date="1988" name="Biochem. J.">
        <title>N-terminal amino acid sequence of the deep-sea tube worm haemoglobin remarkably resembles that of annelid haemoglobin.</title>
        <authorList>
            <person name="Suzuki T."/>
            <person name="Takagi T."/>
            <person name="Ohta S."/>
        </authorList>
    </citation>
    <scope>PROTEIN SEQUENCE</scope>
</reference>
<feature type="chain" id="PRO_0000052522" description="Giant hemoglobin AIV chain">
    <location>
        <begin position="1"/>
        <end position="32" status="greater than"/>
    </location>
</feature>
<feature type="non-terminal residue">
    <location>
        <position position="32"/>
    </location>
</feature>